<comment type="function">
    <text evidence="1">Catalyzes the condensation of (S)-aspartate-beta-semialdehyde [(S)-ASA] and pyruvate to 4-hydroxy-tetrahydrodipicolinate (HTPA).</text>
</comment>
<comment type="catalytic activity">
    <reaction evidence="1">
        <text>L-aspartate 4-semialdehyde + pyruvate = (2S,4S)-4-hydroxy-2,3,4,5-tetrahydrodipicolinate + H2O + H(+)</text>
        <dbReference type="Rhea" id="RHEA:34171"/>
        <dbReference type="ChEBI" id="CHEBI:15361"/>
        <dbReference type="ChEBI" id="CHEBI:15377"/>
        <dbReference type="ChEBI" id="CHEBI:15378"/>
        <dbReference type="ChEBI" id="CHEBI:67139"/>
        <dbReference type="ChEBI" id="CHEBI:537519"/>
        <dbReference type="EC" id="4.3.3.7"/>
    </reaction>
</comment>
<comment type="pathway">
    <text evidence="1">Amino-acid biosynthesis; L-lysine biosynthesis via DAP pathway; (S)-tetrahydrodipicolinate from L-aspartate: step 3/4.</text>
</comment>
<comment type="subunit">
    <text evidence="1">Homotetramer; dimer of dimers.</text>
</comment>
<comment type="subcellular location">
    <subcellularLocation>
        <location evidence="1">Cytoplasm</location>
    </subcellularLocation>
</comment>
<comment type="similarity">
    <text evidence="1">Belongs to the DapA family.</text>
</comment>
<comment type="caution">
    <text evidence="2">Was originally thought to be a dihydrodipicolinate synthase (DHDPS), catalyzing the condensation of (S)-aspartate-beta-semialdehyde [(S)-ASA] and pyruvate to dihydrodipicolinate (DHDP). However, it was shown in E.coli that the product of the enzymatic reaction is not dihydrodipicolinate but in fact (4S)-4-hydroxy-2,3,4,5-tetrahydro-(2S)-dipicolinic acid (HTPA), and that the consecutive dehydration reaction leading to DHDP is not spontaneous but catalyzed by DapB.</text>
</comment>
<keyword id="KW-0028">Amino-acid biosynthesis</keyword>
<keyword id="KW-0963">Cytoplasm</keyword>
<keyword id="KW-0220">Diaminopimelate biosynthesis</keyword>
<keyword id="KW-0456">Lyase</keyword>
<keyword id="KW-0457">Lysine biosynthesis</keyword>
<keyword id="KW-1185">Reference proteome</keyword>
<keyword id="KW-0704">Schiff base</keyword>
<protein>
    <recommendedName>
        <fullName evidence="1">4-hydroxy-tetrahydrodipicolinate synthase</fullName>
        <shortName evidence="1">HTPA synthase</shortName>
        <ecNumber evidence="1">4.3.3.7</ecNumber>
    </recommendedName>
</protein>
<organism>
    <name type="scientific">Thioalkalivibrio sulfidiphilus (strain HL-EbGR7)</name>
    <dbReference type="NCBI Taxonomy" id="396588"/>
    <lineage>
        <taxon>Bacteria</taxon>
        <taxon>Pseudomonadati</taxon>
        <taxon>Pseudomonadota</taxon>
        <taxon>Gammaproteobacteria</taxon>
        <taxon>Chromatiales</taxon>
        <taxon>Ectothiorhodospiraceae</taxon>
        <taxon>Thioalkalivibrio</taxon>
    </lineage>
</organism>
<evidence type="ECO:0000255" key="1">
    <source>
        <dbReference type="HAMAP-Rule" id="MF_00418"/>
    </source>
</evidence>
<evidence type="ECO:0000305" key="2"/>
<proteinExistence type="inferred from homology"/>
<reference key="1">
    <citation type="journal article" date="2011" name="Stand. Genomic Sci.">
        <title>Complete genome sequence of 'Thioalkalivibrio sulfidophilus' HL-EbGr7.</title>
        <authorList>
            <person name="Muyzer G."/>
            <person name="Sorokin D.Y."/>
            <person name="Mavromatis K."/>
            <person name="Lapidus A."/>
            <person name="Clum A."/>
            <person name="Ivanova N."/>
            <person name="Pati A."/>
            <person name="d'Haeseleer P."/>
            <person name="Woyke T."/>
            <person name="Kyrpides N.C."/>
        </authorList>
    </citation>
    <scope>NUCLEOTIDE SEQUENCE [LARGE SCALE GENOMIC DNA]</scope>
    <source>
        <strain>HL-EbGR7</strain>
    </source>
</reference>
<gene>
    <name evidence="1" type="primary">dapA</name>
    <name type="ordered locus">Tgr7_0827</name>
</gene>
<name>DAPA_THISH</name>
<sequence length="294" mass="31282">MFHGSMVALVTPMEADGSVSDASLAELVEFHIQKGTDAIVAVGTTGESATLDFDEHCEVIRKVVDRVAGRIPVIAGTGANSTSEAIELTRCAMQAGADACLLVTPYYNKPTQEGLYLHHKAVAEAVPIPQILYNVPGRTAVDMHNDTVVRLAEISNIVGLKDATGDLDRARDLVARCGGKIDLYSGDDATAMEFLLLGGKGVISVTANVAPAEMHQMCEAAMRGDRAAAEAINARIDLLHRNLFLEANPIPVKWALEQMGLIPPGIRLPLTRLSERFHAPVREALAAAGITLNA</sequence>
<feature type="chain" id="PRO_1000134886" description="4-hydroxy-tetrahydrodipicolinate synthase">
    <location>
        <begin position="1"/>
        <end position="294"/>
    </location>
</feature>
<feature type="active site" description="Proton donor/acceptor" evidence="1">
    <location>
        <position position="133"/>
    </location>
</feature>
<feature type="active site" description="Schiff-base intermediate with substrate" evidence="1">
    <location>
        <position position="161"/>
    </location>
</feature>
<feature type="binding site" evidence="1">
    <location>
        <position position="45"/>
    </location>
    <ligand>
        <name>pyruvate</name>
        <dbReference type="ChEBI" id="CHEBI:15361"/>
    </ligand>
</feature>
<feature type="binding site" evidence="1">
    <location>
        <position position="203"/>
    </location>
    <ligand>
        <name>pyruvate</name>
        <dbReference type="ChEBI" id="CHEBI:15361"/>
    </ligand>
</feature>
<feature type="site" description="Part of a proton relay during catalysis" evidence="1">
    <location>
        <position position="44"/>
    </location>
</feature>
<feature type="site" description="Part of a proton relay during catalysis" evidence="1">
    <location>
        <position position="107"/>
    </location>
</feature>
<accession>B8GN57</accession>
<dbReference type="EC" id="4.3.3.7" evidence="1"/>
<dbReference type="EMBL" id="CP001339">
    <property type="protein sequence ID" value="ACL71918.1"/>
    <property type="molecule type" value="Genomic_DNA"/>
</dbReference>
<dbReference type="RefSeq" id="WP_012637406.1">
    <property type="nucleotide sequence ID" value="NC_011901.1"/>
</dbReference>
<dbReference type="SMR" id="B8GN57"/>
<dbReference type="STRING" id="396588.Tgr7_0827"/>
<dbReference type="KEGG" id="tgr:Tgr7_0827"/>
<dbReference type="eggNOG" id="COG0329">
    <property type="taxonomic scope" value="Bacteria"/>
</dbReference>
<dbReference type="HOGENOM" id="CLU_049343_7_1_6"/>
<dbReference type="OrthoDB" id="9782828at2"/>
<dbReference type="UniPathway" id="UPA00034">
    <property type="reaction ID" value="UER00017"/>
</dbReference>
<dbReference type="Proteomes" id="UP000002383">
    <property type="component" value="Chromosome"/>
</dbReference>
<dbReference type="GO" id="GO:0005829">
    <property type="term" value="C:cytosol"/>
    <property type="evidence" value="ECO:0007669"/>
    <property type="project" value="TreeGrafter"/>
</dbReference>
<dbReference type="GO" id="GO:0008840">
    <property type="term" value="F:4-hydroxy-tetrahydrodipicolinate synthase activity"/>
    <property type="evidence" value="ECO:0007669"/>
    <property type="project" value="UniProtKB-UniRule"/>
</dbReference>
<dbReference type="GO" id="GO:0019877">
    <property type="term" value="P:diaminopimelate biosynthetic process"/>
    <property type="evidence" value="ECO:0007669"/>
    <property type="project" value="UniProtKB-UniRule"/>
</dbReference>
<dbReference type="GO" id="GO:0009089">
    <property type="term" value="P:lysine biosynthetic process via diaminopimelate"/>
    <property type="evidence" value="ECO:0007669"/>
    <property type="project" value="UniProtKB-UniRule"/>
</dbReference>
<dbReference type="CDD" id="cd00950">
    <property type="entry name" value="DHDPS"/>
    <property type="match status" value="1"/>
</dbReference>
<dbReference type="Gene3D" id="3.20.20.70">
    <property type="entry name" value="Aldolase class I"/>
    <property type="match status" value="1"/>
</dbReference>
<dbReference type="HAMAP" id="MF_00418">
    <property type="entry name" value="DapA"/>
    <property type="match status" value="1"/>
</dbReference>
<dbReference type="InterPro" id="IPR013785">
    <property type="entry name" value="Aldolase_TIM"/>
</dbReference>
<dbReference type="InterPro" id="IPR005263">
    <property type="entry name" value="DapA"/>
</dbReference>
<dbReference type="InterPro" id="IPR002220">
    <property type="entry name" value="DapA-like"/>
</dbReference>
<dbReference type="InterPro" id="IPR020625">
    <property type="entry name" value="Schiff_base-form_aldolases_AS"/>
</dbReference>
<dbReference type="InterPro" id="IPR020624">
    <property type="entry name" value="Schiff_base-form_aldolases_CS"/>
</dbReference>
<dbReference type="NCBIfam" id="TIGR00674">
    <property type="entry name" value="dapA"/>
    <property type="match status" value="1"/>
</dbReference>
<dbReference type="PANTHER" id="PTHR12128:SF66">
    <property type="entry name" value="4-HYDROXY-2-OXOGLUTARATE ALDOLASE, MITOCHONDRIAL"/>
    <property type="match status" value="1"/>
</dbReference>
<dbReference type="PANTHER" id="PTHR12128">
    <property type="entry name" value="DIHYDRODIPICOLINATE SYNTHASE"/>
    <property type="match status" value="1"/>
</dbReference>
<dbReference type="Pfam" id="PF00701">
    <property type="entry name" value="DHDPS"/>
    <property type="match status" value="1"/>
</dbReference>
<dbReference type="PIRSF" id="PIRSF001365">
    <property type="entry name" value="DHDPS"/>
    <property type="match status" value="1"/>
</dbReference>
<dbReference type="PRINTS" id="PR00146">
    <property type="entry name" value="DHPICSNTHASE"/>
</dbReference>
<dbReference type="SMART" id="SM01130">
    <property type="entry name" value="DHDPS"/>
    <property type="match status" value="1"/>
</dbReference>
<dbReference type="SUPFAM" id="SSF51569">
    <property type="entry name" value="Aldolase"/>
    <property type="match status" value="1"/>
</dbReference>
<dbReference type="PROSITE" id="PS00665">
    <property type="entry name" value="DHDPS_1"/>
    <property type="match status" value="1"/>
</dbReference>
<dbReference type="PROSITE" id="PS00666">
    <property type="entry name" value="DHDPS_2"/>
    <property type="match status" value="1"/>
</dbReference>